<sequence>MDNKIVYVVSDSVGETADLVVRAAMGQFPFAPDIRRVPYVEDTGTLKEVISIAKSNQALICFTLVKPDMRQYLVTEAAKEGVEAYDIIGPLIDQIEEITGRVPRYEPGVVRRLDEEYFKKIEAIEFAVKYDDGRDARGILKADIVLIGISRTSKTPLSQYLAHNKRLKVANVPLVPEVDPPEELYQVAKEKCFGLKITPEKLNHIRKERLKSLGLSDGATYANINRIKEEIDHFENVVSKINCQVIDVSNKAIEETANIIVNAVQNQKMF</sequence>
<comment type="function">
    <text evidence="1">Bifunctional serine/threonine kinase and phosphorylase involved in the regulation of the pyruvate, phosphate dikinase (PPDK) by catalyzing its phosphorylation/dephosphorylation.</text>
</comment>
<comment type="catalytic activity">
    <reaction evidence="1">
        <text>N(tele)-phospho-L-histidyl/L-threonyl-[pyruvate, phosphate dikinase] + ADP = N(tele)-phospho-L-histidyl/O-phospho-L-threonyl-[pyruvate, phosphate dikinase] + AMP + H(+)</text>
        <dbReference type="Rhea" id="RHEA:43692"/>
        <dbReference type="Rhea" id="RHEA-COMP:10650"/>
        <dbReference type="Rhea" id="RHEA-COMP:10651"/>
        <dbReference type="ChEBI" id="CHEBI:15378"/>
        <dbReference type="ChEBI" id="CHEBI:30013"/>
        <dbReference type="ChEBI" id="CHEBI:61977"/>
        <dbReference type="ChEBI" id="CHEBI:83586"/>
        <dbReference type="ChEBI" id="CHEBI:456215"/>
        <dbReference type="ChEBI" id="CHEBI:456216"/>
        <dbReference type="EC" id="2.7.11.32"/>
    </reaction>
</comment>
<comment type="catalytic activity">
    <reaction evidence="1">
        <text>N(tele)-phospho-L-histidyl/O-phospho-L-threonyl-[pyruvate, phosphate dikinase] + phosphate + H(+) = N(tele)-phospho-L-histidyl/L-threonyl-[pyruvate, phosphate dikinase] + diphosphate</text>
        <dbReference type="Rhea" id="RHEA:43696"/>
        <dbReference type="Rhea" id="RHEA-COMP:10650"/>
        <dbReference type="Rhea" id="RHEA-COMP:10651"/>
        <dbReference type="ChEBI" id="CHEBI:15378"/>
        <dbReference type="ChEBI" id="CHEBI:30013"/>
        <dbReference type="ChEBI" id="CHEBI:33019"/>
        <dbReference type="ChEBI" id="CHEBI:43474"/>
        <dbReference type="ChEBI" id="CHEBI:61977"/>
        <dbReference type="ChEBI" id="CHEBI:83586"/>
        <dbReference type="EC" id="2.7.4.27"/>
    </reaction>
</comment>
<comment type="similarity">
    <text evidence="1">Belongs to the pyruvate, phosphate/water dikinase regulatory protein family. PDRP subfamily.</text>
</comment>
<name>PDRP_BACC3</name>
<accession>C1ESJ0</accession>
<evidence type="ECO:0000255" key="1">
    <source>
        <dbReference type="HAMAP-Rule" id="MF_00921"/>
    </source>
</evidence>
<feature type="chain" id="PRO_1000149700" description="Putative pyruvate, phosphate dikinase regulatory protein">
    <location>
        <begin position="1"/>
        <end position="270"/>
    </location>
</feature>
<feature type="binding site" evidence="1">
    <location>
        <begin position="148"/>
        <end position="155"/>
    </location>
    <ligand>
        <name>ADP</name>
        <dbReference type="ChEBI" id="CHEBI:456216"/>
    </ligand>
</feature>
<gene>
    <name type="ordered locus">BCA_4407</name>
</gene>
<organism>
    <name type="scientific">Bacillus cereus (strain 03BB102)</name>
    <dbReference type="NCBI Taxonomy" id="572264"/>
    <lineage>
        <taxon>Bacteria</taxon>
        <taxon>Bacillati</taxon>
        <taxon>Bacillota</taxon>
        <taxon>Bacilli</taxon>
        <taxon>Bacillales</taxon>
        <taxon>Bacillaceae</taxon>
        <taxon>Bacillus</taxon>
        <taxon>Bacillus cereus group</taxon>
    </lineage>
</organism>
<proteinExistence type="inferred from homology"/>
<dbReference type="EC" id="2.7.11.32" evidence="1"/>
<dbReference type="EC" id="2.7.4.27" evidence="1"/>
<dbReference type="EMBL" id="CP001407">
    <property type="protein sequence ID" value="ACO30546.1"/>
    <property type="molecule type" value="Genomic_DNA"/>
</dbReference>
<dbReference type="RefSeq" id="WP_000368946.1">
    <property type="nucleotide sequence ID" value="NC_012472.1"/>
</dbReference>
<dbReference type="SMR" id="C1ESJ0"/>
<dbReference type="KEGG" id="bcx:BCA_4407"/>
<dbReference type="PATRIC" id="fig|572264.18.peg.4355"/>
<dbReference type="Proteomes" id="UP000002210">
    <property type="component" value="Chromosome"/>
</dbReference>
<dbReference type="GO" id="GO:0043531">
    <property type="term" value="F:ADP binding"/>
    <property type="evidence" value="ECO:0007669"/>
    <property type="project" value="UniProtKB-UniRule"/>
</dbReference>
<dbReference type="GO" id="GO:0005524">
    <property type="term" value="F:ATP binding"/>
    <property type="evidence" value="ECO:0007669"/>
    <property type="project" value="InterPro"/>
</dbReference>
<dbReference type="GO" id="GO:0016776">
    <property type="term" value="F:phosphotransferase activity, phosphate group as acceptor"/>
    <property type="evidence" value="ECO:0007669"/>
    <property type="project" value="UniProtKB-UniRule"/>
</dbReference>
<dbReference type="GO" id="GO:0004674">
    <property type="term" value="F:protein serine/threonine kinase activity"/>
    <property type="evidence" value="ECO:0007669"/>
    <property type="project" value="UniProtKB-UniRule"/>
</dbReference>
<dbReference type="HAMAP" id="MF_00921">
    <property type="entry name" value="PDRP"/>
    <property type="match status" value="1"/>
</dbReference>
<dbReference type="InterPro" id="IPR005177">
    <property type="entry name" value="Kinase-pyrophosphorylase"/>
</dbReference>
<dbReference type="InterPro" id="IPR026565">
    <property type="entry name" value="PPDK_reg"/>
</dbReference>
<dbReference type="NCBIfam" id="NF003742">
    <property type="entry name" value="PRK05339.1"/>
    <property type="match status" value="1"/>
</dbReference>
<dbReference type="PANTHER" id="PTHR31756">
    <property type="entry name" value="PYRUVATE, PHOSPHATE DIKINASE REGULATORY PROTEIN 1, CHLOROPLASTIC"/>
    <property type="match status" value="1"/>
</dbReference>
<dbReference type="PANTHER" id="PTHR31756:SF3">
    <property type="entry name" value="PYRUVATE, PHOSPHATE DIKINASE REGULATORY PROTEIN 1, CHLOROPLASTIC"/>
    <property type="match status" value="1"/>
</dbReference>
<dbReference type="Pfam" id="PF03618">
    <property type="entry name" value="Kinase-PPPase"/>
    <property type="match status" value="1"/>
</dbReference>
<protein>
    <recommendedName>
        <fullName evidence="1">Putative pyruvate, phosphate dikinase regulatory protein</fullName>
        <shortName evidence="1">PPDK regulatory protein</shortName>
        <ecNumber evidence="1">2.7.11.32</ecNumber>
        <ecNumber evidence="1">2.7.4.27</ecNumber>
    </recommendedName>
</protein>
<reference key="1">
    <citation type="submission" date="2009-02" db="EMBL/GenBank/DDBJ databases">
        <title>Genome sequence of Bacillus cereus 03BB102.</title>
        <authorList>
            <person name="Dodson R.J."/>
            <person name="Jackson P."/>
            <person name="Munk A.C."/>
            <person name="Brettin T."/>
            <person name="Bruce D."/>
            <person name="Detter C."/>
            <person name="Tapia R."/>
            <person name="Han C."/>
            <person name="Sutton G."/>
            <person name="Sims D."/>
        </authorList>
    </citation>
    <scope>NUCLEOTIDE SEQUENCE [LARGE SCALE GENOMIC DNA]</scope>
    <source>
        <strain>03BB102</strain>
    </source>
</reference>
<keyword id="KW-0418">Kinase</keyword>
<keyword id="KW-0547">Nucleotide-binding</keyword>
<keyword id="KW-0723">Serine/threonine-protein kinase</keyword>
<keyword id="KW-0808">Transferase</keyword>